<protein>
    <recommendedName>
        <fullName>Alpha-1-syntrophin</fullName>
    </recommendedName>
    <alternativeName>
        <fullName>59 kDa dystrophin-associated protein A1 acidic component 1</fullName>
    </alternativeName>
    <alternativeName>
        <fullName>59-1 DAP</fullName>
    </alternativeName>
    <alternativeName>
        <fullName>Syntrophin-1</fullName>
    </alternativeName>
</protein>
<gene>
    <name type="primary">SNTA1</name>
    <name type="synonym">SNT1</name>
</gene>
<keyword id="KW-0009">Actin-binding</keyword>
<keyword id="KW-0106">Calcium</keyword>
<keyword id="KW-0112">Calmodulin-binding</keyword>
<keyword id="KW-0965">Cell junction</keyword>
<keyword id="KW-1003">Cell membrane</keyword>
<keyword id="KW-0963">Cytoplasm</keyword>
<keyword id="KW-0206">Cytoskeleton</keyword>
<keyword id="KW-0903">Direct protein sequencing</keyword>
<keyword id="KW-0472">Membrane</keyword>
<keyword id="KW-0597">Phosphoprotein</keyword>
<keyword id="KW-1185">Reference proteome</keyword>
<keyword id="KW-0677">Repeat</keyword>
<proteinExistence type="evidence at protein level"/>
<dbReference type="EMBL" id="U01243">
    <property type="protein sequence ID" value="AAA68937.1"/>
    <property type="molecule type" value="mRNA"/>
</dbReference>
<dbReference type="PIR" id="A53214">
    <property type="entry name" value="A53214"/>
</dbReference>
<dbReference type="RefSeq" id="NP_001075802.1">
    <property type="nucleotide sequence ID" value="NM_001082333.1"/>
</dbReference>
<dbReference type="BMRB" id="Q28626"/>
<dbReference type="SMR" id="Q28626"/>
<dbReference type="CORUM" id="Q28626"/>
<dbReference type="FunCoup" id="Q28626">
    <property type="interactions" value="70"/>
</dbReference>
<dbReference type="IntAct" id="Q28626">
    <property type="interactions" value="2"/>
</dbReference>
<dbReference type="MINT" id="Q28626"/>
<dbReference type="STRING" id="9986.ENSOCUP00000027795"/>
<dbReference type="PaxDb" id="9986-ENSOCUP00000010241"/>
<dbReference type="GeneID" id="100009179"/>
<dbReference type="KEGG" id="ocu:100009179"/>
<dbReference type="CTD" id="6640"/>
<dbReference type="eggNOG" id="KOG3551">
    <property type="taxonomic scope" value="Eukaryota"/>
</dbReference>
<dbReference type="InParanoid" id="Q28626"/>
<dbReference type="OrthoDB" id="409749at2759"/>
<dbReference type="Proteomes" id="UP000001811">
    <property type="component" value="Unplaced"/>
</dbReference>
<dbReference type="GO" id="GO:0070161">
    <property type="term" value="C:anchoring junction"/>
    <property type="evidence" value="ECO:0007669"/>
    <property type="project" value="UniProtKB-SubCell"/>
</dbReference>
<dbReference type="GO" id="GO:0005737">
    <property type="term" value="C:cytoplasm"/>
    <property type="evidence" value="ECO:0007669"/>
    <property type="project" value="UniProtKB-KW"/>
</dbReference>
<dbReference type="GO" id="GO:0005856">
    <property type="term" value="C:cytoskeleton"/>
    <property type="evidence" value="ECO:0007669"/>
    <property type="project" value="UniProtKB-SubCell"/>
</dbReference>
<dbReference type="GO" id="GO:0016010">
    <property type="term" value="C:dystrophin-associated glycoprotein complex"/>
    <property type="evidence" value="ECO:0007669"/>
    <property type="project" value="TreeGrafter"/>
</dbReference>
<dbReference type="GO" id="GO:0031594">
    <property type="term" value="C:neuromuscular junction"/>
    <property type="evidence" value="ECO:0007669"/>
    <property type="project" value="TreeGrafter"/>
</dbReference>
<dbReference type="GO" id="GO:0042383">
    <property type="term" value="C:sarcolemma"/>
    <property type="evidence" value="ECO:0007669"/>
    <property type="project" value="UniProtKB-SubCell"/>
</dbReference>
<dbReference type="GO" id="GO:0003779">
    <property type="term" value="F:actin binding"/>
    <property type="evidence" value="ECO:0007669"/>
    <property type="project" value="UniProtKB-KW"/>
</dbReference>
<dbReference type="GO" id="GO:0005516">
    <property type="term" value="F:calmodulin binding"/>
    <property type="evidence" value="ECO:0007669"/>
    <property type="project" value="UniProtKB-KW"/>
</dbReference>
<dbReference type="GO" id="GO:0005198">
    <property type="term" value="F:structural molecule activity"/>
    <property type="evidence" value="ECO:0007669"/>
    <property type="project" value="InterPro"/>
</dbReference>
<dbReference type="GO" id="GO:0035556">
    <property type="term" value="P:intracellular signal transduction"/>
    <property type="evidence" value="ECO:0000314"/>
    <property type="project" value="CACAO"/>
</dbReference>
<dbReference type="CDD" id="cd06801">
    <property type="entry name" value="PDZ_syntrophin-like"/>
    <property type="match status" value="1"/>
</dbReference>
<dbReference type="CDD" id="cd01258">
    <property type="entry name" value="PHsplit_syntrophin"/>
    <property type="match status" value="1"/>
</dbReference>
<dbReference type="FunFam" id="2.30.29.30:FF:000360">
    <property type="entry name" value="Alpha-1-syntrophin"/>
    <property type="match status" value="1"/>
</dbReference>
<dbReference type="FunFam" id="2.30.29.30:FF:000329">
    <property type="entry name" value="alpha-1-syntrophin"/>
    <property type="match status" value="1"/>
</dbReference>
<dbReference type="FunFam" id="2.30.42.10:FF:000052">
    <property type="entry name" value="Syntrophin beta 1"/>
    <property type="match status" value="1"/>
</dbReference>
<dbReference type="Gene3D" id="2.30.42.10">
    <property type="match status" value="1"/>
</dbReference>
<dbReference type="Gene3D" id="2.30.29.30">
    <property type="entry name" value="Pleckstrin-homology domain (PH domain)/Phosphotyrosine-binding domain (PTB)"/>
    <property type="match status" value="2"/>
</dbReference>
<dbReference type="InterPro" id="IPR001478">
    <property type="entry name" value="PDZ"/>
</dbReference>
<dbReference type="InterPro" id="IPR036034">
    <property type="entry name" value="PDZ_sf"/>
</dbReference>
<dbReference type="InterPro" id="IPR011993">
    <property type="entry name" value="PH-like_dom_sf"/>
</dbReference>
<dbReference type="InterPro" id="IPR001849">
    <property type="entry name" value="PH_domain"/>
</dbReference>
<dbReference type="InterPro" id="IPR041428">
    <property type="entry name" value="PHsplit_syntrophin"/>
</dbReference>
<dbReference type="InterPro" id="IPR015482">
    <property type="entry name" value="Syntrophin"/>
</dbReference>
<dbReference type="InterPro" id="IPR055108">
    <property type="entry name" value="Syntrophin_4th"/>
</dbReference>
<dbReference type="PANTHER" id="PTHR10554:SF6">
    <property type="entry name" value="ALPHA-1-SYNTROPHIN"/>
    <property type="match status" value="1"/>
</dbReference>
<dbReference type="PANTHER" id="PTHR10554">
    <property type="entry name" value="SYNTROPHIN"/>
    <property type="match status" value="1"/>
</dbReference>
<dbReference type="Pfam" id="PF00595">
    <property type="entry name" value="PDZ"/>
    <property type="match status" value="1"/>
</dbReference>
<dbReference type="Pfam" id="PF00169">
    <property type="entry name" value="PH"/>
    <property type="match status" value="1"/>
</dbReference>
<dbReference type="Pfam" id="PF18012">
    <property type="entry name" value="PH_17"/>
    <property type="match status" value="1"/>
</dbReference>
<dbReference type="Pfam" id="PF23012">
    <property type="entry name" value="Syntrophin_4th"/>
    <property type="match status" value="1"/>
</dbReference>
<dbReference type="SMART" id="SM00228">
    <property type="entry name" value="PDZ"/>
    <property type="match status" value="1"/>
</dbReference>
<dbReference type="SMART" id="SM00233">
    <property type="entry name" value="PH"/>
    <property type="match status" value="2"/>
</dbReference>
<dbReference type="SUPFAM" id="SSF50156">
    <property type="entry name" value="PDZ domain-like"/>
    <property type="match status" value="1"/>
</dbReference>
<dbReference type="SUPFAM" id="SSF50729">
    <property type="entry name" value="PH domain-like"/>
    <property type="match status" value="1"/>
</dbReference>
<dbReference type="PROSITE" id="PS50106">
    <property type="entry name" value="PDZ"/>
    <property type="match status" value="1"/>
</dbReference>
<dbReference type="PROSITE" id="PS50003">
    <property type="entry name" value="PH_DOMAIN"/>
    <property type="match status" value="2"/>
</dbReference>
<accession>Q28626</accession>
<name>SNTA1_RABIT</name>
<organism>
    <name type="scientific">Oryctolagus cuniculus</name>
    <name type="common">Rabbit</name>
    <dbReference type="NCBI Taxonomy" id="9986"/>
    <lineage>
        <taxon>Eukaryota</taxon>
        <taxon>Metazoa</taxon>
        <taxon>Chordata</taxon>
        <taxon>Craniata</taxon>
        <taxon>Vertebrata</taxon>
        <taxon>Euteleostomi</taxon>
        <taxon>Mammalia</taxon>
        <taxon>Eutheria</taxon>
        <taxon>Euarchontoglires</taxon>
        <taxon>Glires</taxon>
        <taxon>Lagomorpha</taxon>
        <taxon>Leporidae</taxon>
        <taxon>Oryctolagus</taxon>
    </lineage>
</organism>
<comment type="function">
    <text evidence="1">Adapter protein that binds to and probably organizes the subcellular localization of a variety of membrane proteins. May link various receptors to the actin cytoskeleton and the extracellular matrix via dystrophin glycoprotein complex. Plays an important role in synapse formation and in the organization of UTRN and acetylcholine receptors at the neuromuscular synapse. Binds to phosphatidylinositol 4,5-bisphosphate (By similarity).</text>
</comment>
<comment type="subunit">
    <text evidence="1 3">Monomer and homodimer. Interacts with the dystrophin related protein DTNA; SGCG of the dystrophin glycoprotein complex; NOS1; GRB2; GA; TGFA; MAPK12 and the sodium channel proteins SCN4A and SCN5A (By similarity). Interacts with the dystrophin protein DMD in a calmodulin dependent manner and with related protein UTRN; SGCA of the dystrophin glycoprotein complex; F-actin; calmodulin and with the other members of the syntrophin family SNTB1 and SNTB2. Interacts with MYOC; regulates muscle hypertrophy (By similarity). Interacts with DTNB (By similarity).</text>
</comment>
<comment type="interaction">
    <interactant intactId="EBI-8680114">
        <id>Q28626</id>
    </interactant>
    <interactant intactId="EBI-9693910">
        <id>G1SR27</id>
        <label>GRB2</label>
    </interactant>
    <organismsDiffer>false</organismsDiffer>
    <experiments>2</experiments>
</comment>
<comment type="subcellular location">
    <subcellularLocation>
        <location evidence="1">Cell membrane</location>
        <location evidence="1">Sarcolemma</location>
        <topology evidence="1">Peripheral membrane protein</topology>
        <orientation evidence="1">Cytoplasmic side</orientation>
    </subcellularLocation>
    <subcellularLocation>
        <location evidence="1">Cell junction</location>
    </subcellularLocation>
    <subcellularLocation>
        <location evidence="1">Cytoplasm</location>
        <location evidence="1">Cytoskeleton</location>
    </subcellularLocation>
    <text evidence="1">In skeletal muscle, it localizes at the cytoplasmic side of the sarcolemmal membrane and at neuromuscular junctions.</text>
</comment>
<comment type="tissue specificity">
    <text>Highly expressed in skeletal and cardiac muscle and is also detected in brain.</text>
</comment>
<comment type="domain">
    <text evidence="1">The PH 1 domain mediates the oligomerization in a calcium dependent manner, and the association with the phosphatidylinositol 4,5-bisphosphate.</text>
</comment>
<comment type="domain">
    <text evidence="1">The PDZ domain binds to the last three or four amino acids of ion channels and receptor proteins. The association with dystrophin or related proteins probably leaves the PDZ domain available to recruit proteins to the membrane (By similarity).</text>
</comment>
<comment type="domain">
    <text evidence="1">The SU domain binds calmodulin in a calcium-dependent manner (By similarity). It contains actin-binding sites.</text>
</comment>
<comment type="PTM">
    <text evidence="1">Phosphorylated by CaM-kinase II. Phosphorylation may inhibit the interaction with DMD (By similarity).</text>
</comment>
<comment type="similarity">
    <text evidence="7">Belongs to the syntrophin family.</text>
</comment>
<evidence type="ECO:0000250" key="1"/>
<evidence type="ECO:0000250" key="2">
    <source>
        <dbReference type="UniProtKB" id="Q13424"/>
    </source>
</evidence>
<evidence type="ECO:0000250" key="3">
    <source>
        <dbReference type="UniProtKB" id="Q61234"/>
    </source>
</evidence>
<evidence type="ECO:0000255" key="4">
    <source>
        <dbReference type="PROSITE-ProRule" id="PRU00143"/>
    </source>
</evidence>
<evidence type="ECO:0000255" key="5">
    <source>
        <dbReference type="PROSITE-ProRule" id="PRU00145"/>
    </source>
</evidence>
<evidence type="ECO:0000256" key="6">
    <source>
        <dbReference type="SAM" id="MobiDB-lite"/>
    </source>
</evidence>
<evidence type="ECO:0000305" key="7"/>
<sequence length="505" mass="53760">MASGRRAPRTGLLELRAGTGAGAGGERWQRVLVSLAEDALTVSPADGEPGPEPGAVREPEPAQINGAAEPGAAPPQLPEALLLQRRRVTVRKADAGGLGISIKGGRENKMPILISKIFKGLAADQTEALFVGDAILSVNGEDLSSATHDEAVQALKKTGKEVVLEVKYMKEVSPYFKNSAGGTSVGWDSPPASPLQRQPSSPGPQTRNLSEAKHVPLKMAYVSRRCTPSDPEHRYLEICSADGQDTIFLRAKDEASARSWAGAIQAQINALLPWVKDELQALLAASSPAGSQDIKQIGWLTEQLPSGGTAPTLALLTEKELLLYGGLPQTREALSRPARTAPLIATRLVHSGPSKGSVPYDAELSFALRTGTRHGVDTHLFSVESPQELAAWTRQLVDGCHRAAEGVQEVSTACTWNGRPCNLSVHIDKGFTLWAAEPGAARAVLLRQPFEKLQMSSDDGASLLFLDFGGAEGEIQLDLHSCPKTMVFIIHSFLSAKVTRLGLLA</sequence>
<feature type="chain" id="PRO_0000184008" description="Alpha-1-syntrophin">
    <location>
        <begin position="1"/>
        <end position="505"/>
    </location>
</feature>
<feature type="domain" description="PH 1" evidence="5">
    <location>
        <begin position="6"/>
        <end position="269"/>
    </location>
</feature>
<feature type="domain" description="PDZ" evidence="4">
    <location>
        <begin position="87"/>
        <end position="170"/>
    </location>
</feature>
<feature type="domain" description="PH 2" evidence="5">
    <location>
        <begin position="293"/>
        <end position="401"/>
    </location>
</feature>
<feature type="domain" description="SU">
    <location>
        <begin position="449"/>
        <end position="505"/>
    </location>
</feature>
<feature type="region of interest" description="Disordered" evidence="6">
    <location>
        <begin position="1"/>
        <end position="24"/>
    </location>
</feature>
<feature type="region of interest" description="Disordered" evidence="6">
    <location>
        <begin position="40"/>
        <end position="75"/>
    </location>
</feature>
<feature type="region of interest" description="Disordered" evidence="6">
    <location>
        <begin position="183"/>
        <end position="212"/>
    </location>
</feature>
<feature type="region of interest" description="Calmodulin-binding" evidence="1">
    <location>
        <begin position="483"/>
        <end position="505"/>
    </location>
</feature>
<feature type="compositionally biased region" description="Low complexity" evidence="6">
    <location>
        <begin position="9"/>
        <end position="18"/>
    </location>
</feature>
<feature type="compositionally biased region" description="Polar residues" evidence="6">
    <location>
        <begin position="195"/>
        <end position="209"/>
    </location>
</feature>
<feature type="modified residue" description="Phosphoserine" evidence="3">
    <location>
        <position position="101"/>
    </location>
</feature>
<feature type="modified residue" description="Phosphoserine" evidence="2">
    <location>
        <position position="184"/>
    </location>
</feature>
<feature type="modified residue" description="Phosphoserine" evidence="2">
    <location>
        <position position="189"/>
    </location>
</feature>
<feature type="modified residue" description="Phosphoserine" evidence="2">
    <location>
        <position position="193"/>
    </location>
</feature>
<feature type="modified residue" description="Phosphoserine" evidence="3">
    <location>
        <position position="200"/>
    </location>
</feature>
<reference key="1">
    <citation type="journal article" date="1994" name="J. Biol. Chem.">
        <title>Heterogeneity of the 59-kDa dystrophin-associated protein revealed by cDNA cloning and expression.</title>
        <authorList>
            <person name="Yang B."/>
            <person name="Ibraghimov-Beskrovnaya O."/>
            <person name="Moomaw C.R."/>
            <person name="Slaughter C.A."/>
            <person name="Campbell K.P."/>
        </authorList>
    </citation>
    <scope>NUCLEOTIDE SEQUENCE [MRNA]</scope>
    <scope>PROTEIN SEQUENCE OF 31-52; 58-63; 65-66; 92-103; 110-116; 178-196; 235-238; 242-244; 246-249; 258-281; 296-319; 356-369 AND 374-393</scope>
    <scope>INTERACTION WITH THE DYSTROPHIN-ASSOCIATED COMPLEX</scope>
    <source>
        <tissue>Skeletal muscle</tissue>
    </source>
</reference>
<reference key="2">
    <citation type="journal article" date="1995" name="J. Biol. Chem.">
        <title>Identification of alpha-syntrophin binding to syntrophin triplet, dystrophin, and utrophin.</title>
        <authorList>
            <person name="Yang B."/>
            <person name="Jung D."/>
            <person name="Rafael J.A."/>
            <person name="Chamberlain J.S."/>
            <person name="Campbell K.P."/>
        </authorList>
    </citation>
    <scope>INTERACTION WITH DMD; UTRN; SGCA; SNTB1 AND SNTB2</scope>
</reference>
<reference key="3">
    <citation type="journal article" date="1998" name="FEBS Lett.">
        <title>Alpha1-syntrophin has distinct binding sites for actin and calmodulin.</title>
        <authorList>
            <person name="Iwata Y."/>
            <person name="Pan Y."/>
            <person name="Yoshida T."/>
            <person name="Hanada H."/>
            <person name="Shigekawa M."/>
        </authorList>
    </citation>
    <scope>INTERACTION WITH F-ACTIN AND CALMODULIN</scope>
</reference>